<sequence length="444" mass="47497">MARKYFGTDGVRGKVGEFPITPDFVMKLGWAAGKVLSKKGTKKVLIGKDTRISGYMLESALEAGLSAAGLKAILMGPMPTPAVAYLTRTFRAEAGIVISASHNPFYDNGIKFFSADGTKLPDDVEMAIEAELDHEIKCVESADLGKAVRIEDAAGRYIEFCKSTFPSNLSLEGLKMVVDCGNGATYHIAPSVFRELGAEVIAIGCSPDGLNINDGVGSTAPDALAAKVLECKADLGVAFDGDGDRLVMVDHTGYIIDGDEILYIIARDALRNGRLKGGVVGTLMANMGLELALQTLGIPFARAKVGDRYVLEMMNEKGWRIGGENSGHIICLDQTTTGDGIVAALQVLMAICTAEMPLAKLRSGMSKFPQVLVNVRFAEGKDPLAADAVNQEVAKVEQELAGRGRVLLRKSGTEPLIRVMVEGEHEQQVRDMAQRIAQQVESAF</sequence>
<evidence type="ECO:0000255" key="1">
    <source>
        <dbReference type="HAMAP-Rule" id="MF_01554"/>
    </source>
</evidence>
<keyword id="KW-0413">Isomerase</keyword>
<keyword id="KW-0460">Magnesium</keyword>
<keyword id="KW-0479">Metal-binding</keyword>
<keyword id="KW-0597">Phosphoprotein</keyword>
<gene>
    <name evidence="1" type="primary">glmM</name>
    <name type="ordered locus">ASA_1003</name>
</gene>
<name>GLMM_AERS4</name>
<feature type="chain" id="PRO_0000305633" description="Phosphoglucosamine mutase">
    <location>
        <begin position="1"/>
        <end position="444"/>
    </location>
</feature>
<feature type="active site" description="Phosphoserine intermediate" evidence="1">
    <location>
        <position position="101"/>
    </location>
</feature>
<feature type="binding site" description="via phosphate group" evidence="1">
    <location>
        <position position="101"/>
    </location>
    <ligand>
        <name>Mg(2+)</name>
        <dbReference type="ChEBI" id="CHEBI:18420"/>
    </ligand>
</feature>
<feature type="binding site" evidence="1">
    <location>
        <position position="240"/>
    </location>
    <ligand>
        <name>Mg(2+)</name>
        <dbReference type="ChEBI" id="CHEBI:18420"/>
    </ligand>
</feature>
<feature type="binding site" evidence="1">
    <location>
        <position position="242"/>
    </location>
    <ligand>
        <name>Mg(2+)</name>
        <dbReference type="ChEBI" id="CHEBI:18420"/>
    </ligand>
</feature>
<feature type="binding site" evidence="1">
    <location>
        <position position="244"/>
    </location>
    <ligand>
        <name>Mg(2+)</name>
        <dbReference type="ChEBI" id="CHEBI:18420"/>
    </ligand>
</feature>
<feature type="modified residue" description="Phosphoserine" evidence="1">
    <location>
        <position position="101"/>
    </location>
</feature>
<comment type="function">
    <text evidence="1">Catalyzes the conversion of glucosamine-6-phosphate to glucosamine-1-phosphate.</text>
</comment>
<comment type="catalytic activity">
    <reaction evidence="1">
        <text>alpha-D-glucosamine 1-phosphate = D-glucosamine 6-phosphate</text>
        <dbReference type="Rhea" id="RHEA:23424"/>
        <dbReference type="ChEBI" id="CHEBI:58516"/>
        <dbReference type="ChEBI" id="CHEBI:58725"/>
        <dbReference type="EC" id="5.4.2.10"/>
    </reaction>
</comment>
<comment type="cofactor">
    <cofactor evidence="1">
        <name>Mg(2+)</name>
        <dbReference type="ChEBI" id="CHEBI:18420"/>
    </cofactor>
    <text evidence="1">Binds 1 Mg(2+) ion per subunit.</text>
</comment>
<comment type="PTM">
    <text evidence="1">Activated by phosphorylation.</text>
</comment>
<comment type="similarity">
    <text evidence="1">Belongs to the phosphohexose mutase family.</text>
</comment>
<dbReference type="EC" id="5.4.2.10" evidence="1"/>
<dbReference type="EMBL" id="CP000644">
    <property type="protein sequence ID" value="ABO89132.1"/>
    <property type="molecule type" value="Genomic_DNA"/>
</dbReference>
<dbReference type="RefSeq" id="WP_005317535.1">
    <property type="nucleotide sequence ID" value="NC_009348.1"/>
</dbReference>
<dbReference type="SMR" id="A4SJR0"/>
<dbReference type="STRING" id="29491.GCA_000820065_01180"/>
<dbReference type="GeneID" id="79878666"/>
<dbReference type="KEGG" id="asa:ASA_1003"/>
<dbReference type="eggNOG" id="COG1109">
    <property type="taxonomic scope" value="Bacteria"/>
</dbReference>
<dbReference type="HOGENOM" id="CLU_016950_7_0_6"/>
<dbReference type="Proteomes" id="UP000000225">
    <property type="component" value="Chromosome"/>
</dbReference>
<dbReference type="GO" id="GO:0005829">
    <property type="term" value="C:cytosol"/>
    <property type="evidence" value="ECO:0007669"/>
    <property type="project" value="TreeGrafter"/>
</dbReference>
<dbReference type="GO" id="GO:0000287">
    <property type="term" value="F:magnesium ion binding"/>
    <property type="evidence" value="ECO:0007669"/>
    <property type="project" value="UniProtKB-UniRule"/>
</dbReference>
<dbReference type="GO" id="GO:0008966">
    <property type="term" value="F:phosphoglucosamine mutase activity"/>
    <property type="evidence" value="ECO:0007669"/>
    <property type="project" value="UniProtKB-UniRule"/>
</dbReference>
<dbReference type="GO" id="GO:0004615">
    <property type="term" value="F:phosphomannomutase activity"/>
    <property type="evidence" value="ECO:0007669"/>
    <property type="project" value="TreeGrafter"/>
</dbReference>
<dbReference type="GO" id="GO:0005975">
    <property type="term" value="P:carbohydrate metabolic process"/>
    <property type="evidence" value="ECO:0007669"/>
    <property type="project" value="InterPro"/>
</dbReference>
<dbReference type="GO" id="GO:0009252">
    <property type="term" value="P:peptidoglycan biosynthetic process"/>
    <property type="evidence" value="ECO:0007669"/>
    <property type="project" value="TreeGrafter"/>
</dbReference>
<dbReference type="GO" id="GO:0006048">
    <property type="term" value="P:UDP-N-acetylglucosamine biosynthetic process"/>
    <property type="evidence" value="ECO:0007669"/>
    <property type="project" value="TreeGrafter"/>
</dbReference>
<dbReference type="CDD" id="cd05802">
    <property type="entry name" value="GlmM"/>
    <property type="match status" value="1"/>
</dbReference>
<dbReference type="FunFam" id="3.30.310.50:FF:000001">
    <property type="entry name" value="Phosphoglucosamine mutase"/>
    <property type="match status" value="1"/>
</dbReference>
<dbReference type="FunFam" id="3.40.120.10:FF:000001">
    <property type="entry name" value="Phosphoglucosamine mutase"/>
    <property type="match status" value="1"/>
</dbReference>
<dbReference type="FunFam" id="3.40.120.10:FF:000002">
    <property type="entry name" value="Phosphoglucosamine mutase"/>
    <property type="match status" value="1"/>
</dbReference>
<dbReference type="Gene3D" id="3.40.120.10">
    <property type="entry name" value="Alpha-D-Glucose-1,6-Bisphosphate, subunit A, domain 3"/>
    <property type="match status" value="3"/>
</dbReference>
<dbReference type="Gene3D" id="3.30.310.50">
    <property type="entry name" value="Alpha-D-phosphohexomutase, C-terminal domain"/>
    <property type="match status" value="1"/>
</dbReference>
<dbReference type="HAMAP" id="MF_01554_B">
    <property type="entry name" value="GlmM_B"/>
    <property type="match status" value="1"/>
</dbReference>
<dbReference type="InterPro" id="IPR005844">
    <property type="entry name" value="A-D-PHexomutase_a/b/a-I"/>
</dbReference>
<dbReference type="InterPro" id="IPR016055">
    <property type="entry name" value="A-D-PHexomutase_a/b/a-I/II/III"/>
</dbReference>
<dbReference type="InterPro" id="IPR005845">
    <property type="entry name" value="A-D-PHexomutase_a/b/a-II"/>
</dbReference>
<dbReference type="InterPro" id="IPR005846">
    <property type="entry name" value="A-D-PHexomutase_a/b/a-III"/>
</dbReference>
<dbReference type="InterPro" id="IPR005843">
    <property type="entry name" value="A-D-PHexomutase_C"/>
</dbReference>
<dbReference type="InterPro" id="IPR036900">
    <property type="entry name" value="A-D-PHexomutase_C_sf"/>
</dbReference>
<dbReference type="InterPro" id="IPR016066">
    <property type="entry name" value="A-D-PHexomutase_CS"/>
</dbReference>
<dbReference type="InterPro" id="IPR005841">
    <property type="entry name" value="Alpha-D-phosphohexomutase_SF"/>
</dbReference>
<dbReference type="InterPro" id="IPR006352">
    <property type="entry name" value="GlmM_bact"/>
</dbReference>
<dbReference type="InterPro" id="IPR050060">
    <property type="entry name" value="Phosphoglucosamine_mutase"/>
</dbReference>
<dbReference type="NCBIfam" id="TIGR01455">
    <property type="entry name" value="glmM"/>
    <property type="match status" value="1"/>
</dbReference>
<dbReference type="NCBIfam" id="NF008139">
    <property type="entry name" value="PRK10887.1"/>
    <property type="match status" value="1"/>
</dbReference>
<dbReference type="PANTHER" id="PTHR42946:SF1">
    <property type="entry name" value="PHOSPHOGLUCOMUTASE (ALPHA-D-GLUCOSE-1,6-BISPHOSPHATE-DEPENDENT)"/>
    <property type="match status" value="1"/>
</dbReference>
<dbReference type="PANTHER" id="PTHR42946">
    <property type="entry name" value="PHOSPHOHEXOSE MUTASE"/>
    <property type="match status" value="1"/>
</dbReference>
<dbReference type="Pfam" id="PF02878">
    <property type="entry name" value="PGM_PMM_I"/>
    <property type="match status" value="1"/>
</dbReference>
<dbReference type="Pfam" id="PF02879">
    <property type="entry name" value="PGM_PMM_II"/>
    <property type="match status" value="1"/>
</dbReference>
<dbReference type="Pfam" id="PF02880">
    <property type="entry name" value="PGM_PMM_III"/>
    <property type="match status" value="1"/>
</dbReference>
<dbReference type="Pfam" id="PF00408">
    <property type="entry name" value="PGM_PMM_IV"/>
    <property type="match status" value="1"/>
</dbReference>
<dbReference type="PRINTS" id="PR00509">
    <property type="entry name" value="PGMPMM"/>
</dbReference>
<dbReference type="SUPFAM" id="SSF55957">
    <property type="entry name" value="Phosphoglucomutase, C-terminal domain"/>
    <property type="match status" value="1"/>
</dbReference>
<dbReference type="SUPFAM" id="SSF53738">
    <property type="entry name" value="Phosphoglucomutase, first 3 domains"/>
    <property type="match status" value="3"/>
</dbReference>
<dbReference type="PROSITE" id="PS00710">
    <property type="entry name" value="PGM_PMM"/>
    <property type="match status" value="1"/>
</dbReference>
<reference key="1">
    <citation type="journal article" date="2008" name="BMC Genomics">
        <title>The genome of Aeromonas salmonicida subsp. salmonicida A449: insights into the evolution of a fish pathogen.</title>
        <authorList>
            <person name="Reith M.E."/>
            <person name="Singh R.K."/>
            <person name="Curtis B."/>
            <person name="Boyd J.M."/>
            <person name="Bouevitch A."/>
            <person name="Kimball J."/>
            <person name="Munholland J."/>
            <person name="Murphy C."/>
            <person name="Sarty D."/>
            <person name="Williams J."/>
            <person name="Nash J.H."/>
            <person name="Johnson S.C."/>
            <person name="Brown L.L."/>
        </authorList>
    </citation>
    <scope>NUCLEOTIDE SEQUENCE [LARGE SCALE GENOMIC DNA]</scope>
    <source>
        <strain>A449</strain>
    </source>
</reference>
<organism>
    <name type="scientific">Aeromonas salmonicida (strain A449)</name>
    <dbReference type="NCBI Taxonomy" id="382245"/>
    <lineage>
        <taxon>Bacteria</taxon>
        <taxon>Pseudomonadati</taxon>
        <taxon>Pseudomonadota</taxon>
        <taxon>Gammaproteobacteria</taxon>
        <taxon>Aeromonadales</taxon>
        <taxon>Aeromonadaceae</taxon>
        <taxon>Aeromonas</taxon>
    </lineage>
</organism>
<proteinExistence type="inferred from homology"/>
<accession>A4SJR0</accession>
<protein>
    <recommendedName>
        <fullName evidence="1">Phosphoglucosamine mutase</fullName>
        <ecNumber evidence="1">5.4.2.10</ecNumber>
    </recommendedName>
</protein>